<sequence length="424" mass="46356">MTDKRKDGSGKLLYCSFCGKSQHEVRKLIAGPSVYICDECVDLCNDIIREEIKEVAPHRERSALPTPHEIRNHLDDYVIGQEQAKKVLAVAVYNHYKRLRNGDTSNGVELGKSNILLIGPTGSGKTLLAETLARLLDVPFTMADATTLTEAGYVGEDVENIIQKLLQKCDYDVQKAQRGIVYIDEIDKISRKSDNPSITRDVSGEGVQQALLKLIEGTVAAVPPQGGRKHPQQEFLQVDTSKILFICGGAFAGLDKVISHRVETGSGIGFGATVKAKSDKASEGELLAQVEPEDLIKFGLIPEFIGRLPVVATLNELSEEALIQILKEPKNALTKQYQALFNLEGVDLEFRDEALDAIAKKAMARKTGARGLRSIVEAALLDTMYDLPSMEDVEKVVIDESVIDGQSKPLLIYGKPEAQQASGE</sequence>
<comment type="function">
    <text evidence="2">ATP-dependent specificity component of the Clp protease. It directs the protease to specific substrates. Can perform chaperone functions in the absence of ClpP.</text>
</comment>
<comment type="subunit">
    <text evidence="2">Component of the ClpX-ClpP complex. Forms a hexameric ring that, in the presence of ATP, binds to fourteen ClpP subunits assembled into a disk-like structure with a central cavity, resembling the structure of eukaryotic proteasomes.</text>
</comment>
<comment type="similarity">
    <text evidence="2">Belongs to the ClpX chaperone family.</text>
</comment>
<evidence type="ECO:0000250" key="1"/>
<evidence type="ECO:0000255" key="2">
    <source>
        <dbReference type="HAMAP-Rule" id="MF_00175"/>
    </source>
</evidence>
<evidence type="ECO:0000255" key="3">
    <source>
        <dbReference type="PROSITE-ProRule" id="PRU01250"/>
    </source>
</evidence>
<name>CLPX_SHIFL</name>
<keyword id="KW-0067">ATP-binding</keyword>
<keyword id="KW-0143">Chaperone</keyword>
<keyword id="KW-0479">Metal-binding</keyword>
<keyword id="KW-0547">Nucleotide-binding</keyword>
<keyword id="KW-1185">Reference proteome</keyword>
<keyword id="KW-0862">Zinc</keyword>
<accession>P0A6H4</accession>
<accession>P33138</accession>
<organism>
    <name type="scientific">Shigella flexneri</name>
    <dbReference type="NCBI Taxonomy" id="623"/>
    <lineage>
        <taxon>Bacteria</taxon>
        <taxon>Pseudomonadati</taxon>
        <taxon>Pseudomonadota</taxon>
        <taxon>Gammaproteobacteria</taxon>
        <taxon>Enterobacterales</taxon>
        <taxon>Enterobacteriaceae</taxon>
        <taxon>Shigella</taxon>
    </lineage>
</organism>
<gene>
    <name evidence="2" type="primary">clpX</name>
    <name type="synonym">lopC</name>
    <name type="ordered locus">SF0383</name>
    <name type="ordered locus">S0389</name>
</gene>
<feature type="initiator methionine" description="Removed" evidence="1">
    <location>
        <position position="1"/>
    </location>
</feature>
<feature type="chain" id="PRO_0000160418" description="ATP-dependent Clp protease ATP-binding subunit ClpX">
    <location>
        <begin position="2"/>
        <end position="424"/>
    </location>
</feature>
<feature type="domain" description="ClpX-type ZB" evidence="3">
    <location>
        <begin position="2"/>
        <end position="56"/>
    </location>
</feature>
<feature type="binding site" evidence="3">
    <location>
        <position position="15"/>
    </location>
    <ligand>
        <name>Zn(2+)</name>
        <dbReference type="ChEBI" id="CHEBI:29105"/>
    </ligand>
</feature>
<feature type="binding site" evidence="3">
    <location>
        <position position="18"/>
    </location>
    <ligand>
        <name>Zn(2+)</name>
        <dbReference type="ChEBI" id="CHEBI:29105"/>
    </ligand>
</feature>
<feature type="binding site" evidence="3">
    <location>
        <position position="37"/>
    </location>
    <ligand>
        <name>Zn(2+)</name>
        <dbReference type="ChEBI" id="CHEBI:29105"/>
    </ligand>
</feature>
<feature type="binding site" evidence="3">
    <location>
        <position position="40"/>
    </location>
    <ligand>
        <name>Zn(2+)</name>
        <dbReference type="ChEBI" id="CHEBI:29105"/>
    </ligand>
</feature>
<feature type="binding site" evidence="2">
    <location>
        <begin position="120"/>
        <end position="127"/>
    </location>
    <ligand>
        <name>ATP</name>
        <dbReference type="ChEBI" id="CHEBI:30616"/>
    </ligand>
</feature>
<protein>
    <recommendedName>
        <fullName evidence="2">ATP-dependent Clp protease ATP-binding subunit ClpX</fullName>
    </recommendedName>
</protein>
<dbReference type="EMBL" id="AE005674">
    <property type="protein sequence ID" value="AAN42039.1"/>
    <property type="molecule type" value="Genomic_DNA"/>
</dbReference>
<dbReference type="EMBL" id="AE014073">
    <property type="protein sequence ID" value="AAP15917.1"/>
    <property type="molecule type" value="Genomic_DNA"/>
</dbReference>
<dbReference type="RefSeq" id="NP_706332.1">
    <property type="nucleotide sequence ID" value="NC_004337.2"/>
</dbReference>
<dbReference type="RefSeq" id="WP_000130305.1">
    <property type="nucleotide sequence ID" value="NZ_WPGW01000052.1"/>
</dbReference>
<dbReference type="SMR" id="P0A6H4"/>
<dbReference type="STRING" id="198214.SF0383"/>
<dbReference type="PaxDb" id="198214-SF0383"/>
<dbReference type="GeneID" id="1027698"/>
<dbReference type="GeneID" id="93777016"/>
<dbReference type="KEGG" id="sfl:SF0383"/>
<dbReference type="KEGG" id="sfx:S0389"/>
<dbReference type="PATRIC" id="fig|198214.7.peg.441"/>
<dbReference type="HOGENOM" id="CLU_014218_8_2_6"/>
<dbReference type="Proteomes" id="UP000001006">
    <property type="component" value="Chromosome"/>
</dbReference>
<dbReference type="Proteomes" id="UP000002673">
    <property type="component" value="Chromosome"/>
</dbReference>
<dbReference type="GO" id="GO:0009376">
    <property type="term" value="C:HslUV protease complex"/>
    <property type="evidence" value="ECO:0007669"/>
    <property type="project" value="TreeGrafter"/>
</dbReference>
<dbReference type="GO" id="GO:0005524">
    <property type="term" value="F:ATP binding"/>
    <property type="evidence" value="ECO:0007669"/>
    <property type="project" value="UniProtKB-UniRule"/>
</dbReference>
<dbReference type="GO" id="GO:0016887">
    <property type="term" value="F:ATP hydrolysis activity"/>
    <property type="evidence" value="ECO:0007669"/>
    <property type="project" value="InterPro"/>
</dbReference>
<dbReference type="GO" id="GO:0140662">
    <property type="term" value="F:ATP-dependent protein folding chaperone"/>
    <property type="evidence" value="ECO:0007669"/>
    <property type="project" value="InterPro"/>
</dbReference>
<dbReference type="GO" id="GO:0046983">
    <property type="term" value="F:protein dimerization activity"/>
    <property type="evidence" value="ECO:0007669"/>
    <property type="project" value="InterPro"/>
</dbReference>
<dbReference type="GO" id="GO:0051082">
    <property type="term" value="F:unfolded protein binding"/>
    <property type="evidence" value="ECO:0007669"/>
    <property type="project" value="UniProtKB-UniRule"/>
</dbReference>
<dbReference type="GO" id="GO:0008270">
    <property type="term" value="F:zinc ion binding"/>
    <property type="evidence" value="ECO:0007669"/>
    <property type="project" value="InterPro"/>
</dbReference>
<dbReference type="GO" id="GO:0051301">
    <property type="term" value="P:cell division"/>
    <property type="evidence" value="ECO:0007669"/>
    <property type="project" value="TreeGrafter"/>
</dbReference>
<dbReference type="GO" id="GO:0051603">
    <property type="term" value="P:proteolysis involved in protein catabolic process"/>
    <property type="evidence" value="ECO:0007669"/>
    <property type="project" value="TreeGrafter"/>
</dbReference>
<dbReference type="CDD" id="cd19497">
    <property type="entry name" value="RecA-like_ClpX"/>
    <property type="match status" value="1"/>
</dbReference>
<dbReference type="FunFam" id="1.10.8.60:FF:000002">
    <property type="entry name" value="ATP-dependent Clp protease ATP-binding subunit ClpX"/>
    <property type="match status" value="1"/>
</dbReference>
<dbReference type="FunFam" id="3.40.50.300:FF:000005">
    <property type="entry name" value="ATP-dependent Clp protease ATP-binding subunit ClpX"/>
    <property type="match status" value="1"/>
</dbReference>
<dbReference type="Gene3D" id="1.10.8.60">
    <property type="match status" value="1"/>
</dbReference>
<dbReference type="Gene3D" id="6.20.220.10">
    <property type="entry name" value="ClpX chaperone, C4-type zinc finger domain"/>
    <property type="match status" value="1"/>
</dbReference>
<dbReference type="Gene3D" id="3.40.50.300">
    <property type="entry name" value="P-loop containing nucleotide triphosphate hydrolases"/>
    <property type="match status" value="1"/>
</dbReference>
<dbReference type="HAMAP" id="MF_00175">
    <property type="entry name" value="ClpX"/>
    <property type="match status" value="1"/>
</dbReference>
<dbReference type="InterPro" id="IPR003593">
    <property type="entry name" value="AAA+_ATPase"/>
</dbReference>
<dbReference type="InterPro" id="IPR050052">
    <property type="entry name" value="ATP-dep_Clp_protease_ClpX"/>
</dbReference>
<dbReference type="InterPro" id="IPR003959">
    <property type="entry name" value="ATPase_AAA_core"/>
</dbReference>
<dbReference type="InterPro" id="IPR019489">
    <property type="entry name" value="Clp_ATPase_C"/>
</dbReference>
<dbReference type="InterPro" id="IPR004487">
    <property type="entry name" value="Clp_protease_ATP-bd_su_ClpX"/>
</dbReference>
<dbReference type="InterPro" id="IPR046425">
    <property type="entry name" value="ClpX_bact"/>
</dbReference>
<dbReference type="InterPro" id="IPR027417">
    <property type="entry name" value="P-loop_NTPase"/>
</dbReference>
<dbReference type="InterPro" id="IPR010603">
    <property type="entry name" value="Znf_CppX_C4"/>
</dbReference>
<dbReference type="InterPro" id="IPR038366">
    <property type="entry name" value="Znf_CppX_C4_sf"/>
</dbReference>
<dbReference type="NCBIfam" id="TIGR00382">
    <property type="entry name" value="clpX"/>
    <property type="match status" value="1"/>
</dbReference>
<dbReference type="NCBIfam" id="NF003745">
    <property type="entry name" value="PRK05342.1"/>
    <property type="match status" value="1"/>
</dbReference>
<dbReference type="PANTHER" id="PTHR48102:SF7">
    <property type="entry name" value="ATP-DEPENDENT CLP PROTEASE ATP-BINDING SUBUNIT CLPX-LIKE, MITOCHONDRIAL"/>
    <property type="match status" value="1"/>
</dbReference>
<dbReference type="PANTHER" id="PTHR48102">
    <property type="entry name" value="ATP-DEPENDENT CLP PROTEASE ATP-BINDING SUBUNIT CLPX-LIKE, MITOCHONDRIAL-RELATED"/>
    <property type="match status" value="1"/>
</dbReference>
<dbReference type="Pfam" id="PF07724">
    <property type="entry name" value="AAA_2"/>
    <property type="match status" value="1"/>
</dbReference>
<dbReference type="Pfam" id="PF10431">
    <property type="entry name" value="ClpB_D2-small"/>
    <property type="match status" value="1"/>
</dbReference>
<dbReference type="Pfam" id="PF06689">
    <property type="entry name" value="zf-C4_ClpX"/>
    <property type="match status" value="1"/>
</dbReference>
<dbReference type="SMART" id="SM00382">
    <property type="entry name" value="AAA"/>
    <property type="match status" value="1"/>
</dbReference>
<dbReference type="SMART" id="SM01086">
    <property type="entry name" value="ClpB_D2-small"/>
    <property type="match status" value="1"/>
</dbReference>
<dbReference type="SMART" id="SM00994">
    <property type="entry name" value="zf-C4_ClpX"/>
    <property type="match status" value="1"/>
</dbReference>
<dbReference type="SUPFAM" id="SSF57716">
    <property type="entry name" value="Glucocorticoid receptor-like (DNA-binding domain)"/>
    <property type="match status" value="1"/>
</dbReference>
<dbReference type="SUPFAM" id="SSF52540">
    <property type="entry name" value="P-loop containing nucleoside triphosphate hydrolases"/>
    <property type="match status" value="1"/>
</dbReference>
<dbReference type="PROSITE" id="PS51902">
    <property type="entry name" value="CLPX_ZB"/>
    <property type="match status" value="1"/>
</dbReference>
<proteinExistence type="inferred from homology"/>
<reference key="1">
    <citation type="journal article" date="2002" name="Nucleic Acids Res.">
        <title>Genome sequence of Shigella flexneri 2a: insights into pathogenicity through comparison with genomes of Escherichia coli K12 and O157.</title>
        <authorList>
            <person name="Jin Q."/>
            <person name="Yuan Z."/>
            <person name="Xu J."/>
            <person name="Wang Y."/>
            <person name="Shen Y."/>
            <person name="Lu W."/>
            <person name="Wang J."/>
            <person name="Liu H."/>
            <person name="Yang J."/>
            <person name="Yang F."/>
            <person name="Zhang X."/>
            <person name="Zhang J."/>
            <person name="Yang G."/>
            <person name="Wu H."/>
            <person name="Qu D."/>
            <person name="Dong J."/>
            <person name="Sun L."/>
            <person name="Xue Y."/>
            <person name="Zhao A."/>
            <person name="Gao Y."/>
            <person name="Zhu J."/>
            <person name="Kan B."/>
            <person name="Ding K."/>
            <person name="Chen S."/>
            <person name="Cheng H."/>
            <person name="Yao Z."/>
            <person name="He B."/>
            <person name="Chen R."/>
            <person name="Ma D."/>
            <person name="Qiang B."/>
            <person name="Wen Y."/>
            <person name="Hou Y."/>
            <person name="Yu J."/>
        </authorList>
    </citation>
    <scope>NUCLEOTIDE SEQUENCE [LARGE SCALE GENOMIC DNA]</scope>
    <source>
        <strain>301 / Serotype 2a</strain>
    </source>
</reference>
<reference key="2">
    <citation type="journal article" date="2003" name="Infect. Immun.">
        <title>Complete genome sequence and comparative genomics of Shigella flexneri serotype 2a strain 2457T.</title>
        <authorList>
            <person name="Wei J."/>
            <person name="Goldberg M.B."/>
            <person name="Burland V."/>
            <person name="Venkatesan M.M."/>
            <person name="Deng W."/>
            <person name="Fournier G."/>
            <person name="Mayhew G.F."/>
            <person name="Plunkett G. III"/>
            <person name="Rose D.J."/>
            <person name="Darling A."/>
            <person name="Mau B."/>
            <person name="Perna N.T."/>
            <person name="Payne S.M."/>
            <person name="Runyen-Janecky L.J."/>
            <person name="Zhou S."/>
            <person name="Schwartz D.C."/>
            <person name="Blattner F.R."/>
        </authorList>
    </citation>
    <scope>NUCLEOTIDE SEQUENCE [LARGE SCALE GENOMIC DNA]</scope>
    <source>
        <strain>ATCC 700930 / 2457T / Serotype 2a</strain>
    </source>
</reference>